<keyword id="KW-0067">ATP-binding</keyword>
<keyword id="KW-0963">Cytoplasm</keyword>
<keyword id="KW-0418">Kinase</keyword>
<keyword id="KW-0547">Nucleotide-binding</keyword>
<keyword id="KW-0539">Nucleus</keyword>
<keyword id="KW-0597">Phosphoprotein</keyword>
<keyword id="KW-1185">Reference proteome</keyword>
<keyword id="KW-0723">Serine/threonine-protein kinase</keyword>
<keyword id="KW-0808">Transferase</keyword>
<dbReference type="EC" id="2.7.11.1"/>
<dbReference type="EMBL" id="CU329670">
    <property type="protein sequence ID" value="CAB75990.2"/>
    <property type="molecule type" value="Genomic_DNA"/>
</dbReference>
<dbReference type="PIR" id="T37886">
    <property type="entry name" value="T37886"/>
</dbReference>
<dbReference type="PIR" id="T50300">
    <property type="entry name" value="T50300"/>
</dbReference>
<dbReference type="RefSeq" id="XP_001713069.1">
    <property type="nucleotide sequence ID" value="XM_001713017.2"/>
</dbReference>
<dbReference type="SMR" id="Q9UTH3"/>
<dbReference type="BioGRID" id="278850">
    <property type="interactions" value="31"/>
</dbReference>
<dbReference type="FunCoup" id="Q9UTH3">
    <property type="interactions" value="169"/>
</dbReference>
<dbReference type="STRING" id="284812.Q9UTH3"/>
<dbReference type="iPTMnet" id="Q9UTH3"/>
<dbReference type="PaxDb" id="4896-SPAC1805.01c.1"/>
<dbReference type="EnsemblFungi" id="SPAC1805.01c.1">
    <property type="protein sequence ID" value="SPAC1805.01c.1:pep"/>
    <property type="gene ID" value="SPAC1805.01c"/>
</dbReference>
<dbReference type="PomBase" id="SPAC1805.01c">
    <property type="gene designation" value="ppk6"/>
</dbReference>
<dbReference type="VEuPathDB" id="FungiDB:SPAC1805.01c"/>
<dbReference type="eggNOG" id="KOG1152">
    <property type="taxonomic scope" value="Eukaryota"/>
</dbReference>
<dbReference type="HOGENOM" id="CLU_360214_0_0_1"/>
<dbReference type="InParanoid" id="Q9UTH3"/>
<dbReference type="OMA" id="SANDYFC"/>
<dbReference type="PhylomeDB" id="Q9UTH3"/>
<dbReference type="PRO" id="PR:Q9UTH3"/>
<dbReference type="Proteomes" id="UP000002485">
    <property type="component" value="Chromosome I"/>
</dbReference>
<dbReference type="GO" id="GO:0005737">
    <property type="term" value="C:cytoplasm"/>
    <property type="evidence" value="ECO:0000318"/>
    <property type="project" value="GO_Central"/>
</dbReference>
<dbReference type="GO" id="GO:0005829">
    <property type="term" value="C:cytosol"/>
    <property type="evidence" value="ECO:0007005"/>
    <property type="project" value="PomBase"/>
</dbReference>
<dbReference type="GO" id="GO:0005634">
    <property type="term" value="C:nucleus"/>
    <property type="evidence" value="ECO:0007005"/>
    <property type="project" value="PomBase"/>
</dbReference>
<dbReference type="GO" id="GO:0005524">
    <property type="term" value="F:ATP binding"/>
    <property type="evidence" value="ECO:0000255"/>
    <property type="project" value="PomBase"/>
</dbReference>
<dbReference type="GO" id="GO:0106310">
    <property type="term" value="F:protein serine kinase activity"/>
    <property type="evidence" value="ECO:0007669"/>
    <property type="project" value="RHEA"/>
</dbReference>
<dbReference type="GO" id="GO:0004674">
    <property type="term" value="F:protein serine/threonine kinase activity"/>
    <property type="evidence" value="ECO:0000318"/>
    <property type="project" value="GO_Central"/>
</dbReference>
<dbReference type="GO" id="GO:0035556">
    <property type="term" value="P:intracellular signal transduction"/>
    <property type="evidence" value="ECO:0000318"/>
    <property type="project" value="GO_Central"/>
</dbReference>
<dbReference type="GO" id="GO:0045719">
    <property type="term" value="P:negative regulation of glycogen biosynthetic process"/>
    <property type="evidence" value="ECO:0000318"/>
    <property type="project" value="GO_Central"/>
</dbReference>
<dbReference type="GO" id="GO:0032878">
    <property type="term" value="P:regulation of establishment or maintenance of cell polarity"/>
    <property type="evidence" value="ECO:0000315"/>
    <property type="project" value="PomBase"/>
</dbReference>
<dbReference type="CDD" id="cd14004">
    <property type="entry name" value="STKc_PASK"/>
    <property type="match status" value="1"/>
</dbReference>
<dbReference type="FunFam" id="1.10.510.10:FF:000320">
    <property type="entry name" value="Serine/threonine protein kinase"/>
    <property type="match status" value="1"/>
</dbReference>
<dbReference type="FunFam" id="3.30.200.20:FF:000314">
    <property type="entry name" value="Serine/threonine protein kinase"/>
    <property type="match status" value="1"/>
</dbReference>
<dbReference type="Gene3D" id="3.30.450.20">
    <property type="entry name" value="PAS domain"/>
    <property type="match status" value="1"/>
</dbReference>
<dbReference type="Gene3D" id="3.30.200.20">
    <property type="entry name" value="Phosphorylase Kinase, domain 1"/>
    <property type="match status" value="1"/>
</dbReference>
<dbReference type="Gene3D" id="1.10.510.10">
    <property type="entry name" value="Transferase(Phosphotransferase) domain 1"/>
    <property type="match status" value="1"/>
</dbReference>
<dbReference type="InterPro" id="IPR011009">
    <property type="entry name" value="Kinase-like_dom_sf"/>
</dbReference>
<dbReference type="InterPro" id="IPR000014">
    <property type="entry name" value="PAS"/>
</dbReference>
<dbReference type="InterPro" id="IPR035965">
    <property type="entry name" value="PAS-like_dom_sf"/>
</dbReference>
<dbReference type="InterPro" id="IPR000719">
    <property type="entry name" value="Prot_kinase_dom"/>
</dbReference>
<dbReference type="InterPro" id="IPR017441">
    <property type="entry name" value="Protein_kinase_ATP_BS"/>
</dbReference>
<dbReference type="InterPro" id="IPR008271">
    <property type="entry name" value="Ser/Thr_kinase_AS"/>
</dbReference>
<dbReference type="PANTHER" id="PTHR24346">
    <property type="entry name" value="MAP/MICROTUBULE AFFINITY-REGULATING KINASE"/>
    <property type="match status" value="1"/>
</dbReference>
<dbReference type="PANTHER" id="PTHR24346:SF51">
    <property type="entry name" value="PAS DOMAIN-CONTAINING SERINE_THREONINE-PROTEIN KINASE"/>
    <property type="match status" value="1"/>
</dbReference>
<dbReference type="Pfam" id="PF13426">
    <property type="entry name" value="PAS_9"/>
    <property type="match status" value="1"/>
</dbReference>
<dbReference type="Pfam" id="PF00069">
    <property type="entry name" value="Pkinase"/>
    <property type="match status" value="1"/>
</dbReference>
<dbReference type="SMART" id="SM00220">
    <property type="entry name" value="S_TKc"/>
    <property type="match status" value="1"/>
</dbReference>
<dbReference type="SUPFAM" id="SSF56112">
    <property type="entry name" value="Protein kinase-like (PK-like)"/>
    <property type="match status" value="1"/>
</dbReference>
<dbReference type="SUPFAM" id="SSF55785">
    <property type="entry name" value="PYP-like sensor domain (PAS domain)"/>
    <property type="match status" value="1"/>
</dbReference>
<dbReference type="PROSITE" id="PS00107">
    <property type="entry name" value="PROTEIN_KINASE_ATP"/>
    <property type="match status" value="1"/>
</dbReference>
<dbReference type="PROSITE" id="PS50011">
    <property type="entry name" value="PROTEIN_KINASE_DOM"/>
    <property type="match status" value="1"/>
</dbReference>
<dbReference type="PROSITE" id="PS00108">
    <property type="entry name" value="PROTEIN_KINASE_ST"/>
    <property type="match status" value="1"/>
</dbReference>
<evidence type="ECO:0000255" key="1">
    <source>
        <dbReference type="PROSITE-ProRule" id="PRU00159"/>
    </source>
</evidence>
<evidence type="ECO:0000255" key="2">
    <source>
        <dbReference type="PROSITE-ProRule" id="PRU10027"/>
    </source>
</evidence>
<evidence type="ECO:0000269" key="3">
    <source>
    </source>
</evidence>
<evidence type="ECO:0000269" key="4">
    <source>
    </source>
</evidence>
<name>PPK6_SCHPO</name>
<comment type="catalytic activity">
    <reaction>
        <text>L-seryl-[protein] + ATP = O-phospho-L-seryl-[protein] + ADP + H(+)</text>
        <dbReference type="Rhea" id="RHEA:17989"/>
        <dbReference type="Rhea" id="RHEA-COMP:9863"/>
        <dbReference type="Rhea" id="RHEA-COMP:11604"/>
        <dbReference type="ChEBI" id="CHEBI:15378"/>
        <dbReference type="ChEBI" id="CHEBI:29999"/>
        <dbReference type="ChEBI" id="CHEBI:30616"/>
        <dbReference type="ChEBI" id="CHEBI:83421"/>
        <dbReference type="ChEBI" id="CHEBI:456216"/>
        <dbReference type="EC" id="2.7.11.1"/>
    </reaction>
</comment>
<comment type="catalytic activity">
    <reaction>
        <text>L-threonyl-[protein] + ATP = O-phospho-L-threonyl-[protein] + ADP + H(+)</text>
        <dbReference type="Rhea" id="RHEA:46608"/>
        <dbReference type="Rhea" id="RHEA-COMP:11060"/>
        <dbReference type="Rhea" id="RHEA-COMP:11605"/>
        <dbReference type="ChEBI" id="CHEBI:15378"/>
        <dbReference type="ChEBI" id="CHEBI:30013"/>
        <dbReference type="ChEBI" id="CHEBI:30616"/>
        <dbReference type="ChEBI" id="CHEBI:61977"/>
        <dbReference type="ChEBI" id="CHEBI:456216"/>
        <dbReference type="EC" id="2.7.11.1"/>
    </reaction>
</comment>
<comment type="subcellular location">
    <subcellularLocation>
        <location evidence="3">Cytoplasm</location>
    </subcellularLocation>
    <subcellularLocation>
        <location evidence="3">Nucleus</location>
    </subcellularLocation>
</comment>
<comment type="similarity">
    <text evidence="1">Belongs to the protein kinase superfamily. Ser/Thr protein kinase family.</text>
</comment>
<gene>
    <name type="primary">ppk6</name>
    <name type="ORF">SPAC1805.01c</name>
    <name type="ORF">SPAPJ736.02c</name>
</gene>
<proteinExistence type="evidence at protein level"/>
<feature type="chain" id="PRO_0000086147" description="Serine/threonine-protein kinase ppk6">
    <location>
        <begin position="1"/>
        <end position="775"/>
    </location>
</feature>
<feature type="domain" description="Protein kinase" evidence="1">
    <location>
        <begin position="503"/>
        <end position="758"/>
    </location>
</feature>
<feature type="active site" description="Proton acceptor" evidence="1 2">
    <location>
        <position position="636"/>
    </location>
</feature>
<feature type="binding site" evidence="1">
    <location>
        <begin position="509"/>
        <end position="517"/>
    </location>
    <ligand>
        <name>ATP</name>
        <dbReference type="ChEBI" id="CHEBI:30616"/>
    </ligand>
</feature>
<feature type="binding site" evidence="1">
    <location>
        <position position="533"/>
    </location>
    <ligand>
        <name>ATP</name>
        <dbReference type="ChEBI" id="CHEBI:30616"/>
    </ligand>
</feature>
<feature type="modified residue" description="Phosphoserine" evidence="4">
    <location>
        <position position="132"/>
    </location>
</feature>
<feature type="modified residue" description="Phosphoserine" evidence="4">
    <location>
        <position position="134"/>
    </location>
</feature>
<protein>
    <recommendedName>
        <fullName>Serine/threonine-protein kinase ppk6</fullName>
        <ecNumber>2.7.11.1</ecNumber>
    </recommendedName>
</protein>
<sequence length="775" mass="88614">MSQDVFKHLTSKQVQRTRARSFGASFERPLASFLPKKENKNLLSNAARVKLLTFSSSSPYSFSYSPVLSRDANDGYIPLDTSSRANLWESVTDYDLQHANEPLVGNYYISTEALGDGLNRSPFTINPEKRRSLSDISYVPIPHKEHSNWPVHCSSQAIVTTSNTTFSIWSANDYFCLLFGYAGSQLNRHSVFDIFPKSFSSHLSNLIVSFPIDNEHERILFCGDVFPVITVDGVRLMDFWVKEKQGKLIWILEFVEESYIDIKLQDGVAVDERTEQPLTSDLLPSRLPKTWDQRLYLTTKTTEGYYCPSMIYPLSKSSFQYIIFHYAAGLLFINSDFKIISLNEALFESMLGYSDLLTKDISLIFPDFKLVLQQLADSHALDPGRVVSEIHVRHAYRTCTADKMKKADYPYLIHSDGNIIQIDCQIISVSPHSVKSNEPAFGVWLIFDSVDNRASDFVRSMRSSVILEEVVISDESEEEEDLSADEDYVDSEWEVVPHNIASYTTIKELGIGAYGQVKLATYKSNKVHEVILKSISKSRILLDSWMRDKDLGTVPMEISILHFLKAHSHPNIVKMITFFEDNENYYLLTEPQKPGIDLFDYIELKPSISEKESKAIFFQIALAVAHLHSFDIIHRDIKDENVILEGNGCARLIDFGSSSLTKNGPFDTFRGTVGFAAPELLRGEKYLGKEQDIWALGILLYTIVYRENPYYNIEEILDAKLRIPFELSKDNVDLICRMLDRNVHDRITIEETLQHHWFDDIRYLDTSHIRIPLSS</sequence>
<accession>Q9UTH3</accession>
<accession>Q9P7P4</accession>
<reference key="1">
    <citation type="journal article" date="2002" name="Nature">
        <title>The genome sequence of Schizosaccharomyces pombe.</title>
        <authorList>
            <person name="Wood V."/>
            <person name="Gwilliam R."/>
            <person name="Rajandream M.A."/>
            <person name="Lyne M.H."/>
            <person name="Lyne R."/>
            <person name="Stewart A."/>
            <person name="Sgouros J.G."/>
            <person name="Peat N."/>
            <person name="Hayles J."/>
            <person name="Baker S.G."/>
            <person name="Basham D."/>
            <person name="Bowman S."/>
            <person name="Brooks K."/>
            <person name="Brown D."/>
            <person name="Brown S."/>
            <person name="Chillingworth T."/>
            <person name="Churcher C.M."/>
            <person name="Collins M."/>
            <person name="Connor R."/>
            <person name="Cronin A."/>
            <person name="Davis P."/>
            <person name="Feltwell T."/>
            <person name="Fraser A."/>
            <person name="Gentles S."/>
            <person name="Goble A."/>
            <person name="Hamlin N."/>
            <person name="Harris D.E."/>
            <person name="Hidalgo J."/>
            <person name="Hodgson G."/>
            <person name="Holroyd S."/>
            <person name="Hornsby T."/>
            <person name="Howarth S."/>
            <person name="Huckle E.J."/>
            <person name="Hunt S."/>
            <person name="Jagels K."/>
            <person name="James K.D."/>
            <person name="Jones L."/>
            <person name="Jones M."/>
            <person name="Leather S."/>
            <person name="McDonald S."/>
            <person name="McLean J."/>
            <person name="Mooney P."/>
            <person name="Moule S."/>
            <person name="Mungall K.L."/>
            <person name="Murphy L.D."/>
            <person name="Niblett D."/>
            <person name="Odell C."/>
            <person name="Oliver K."/>
            <person name="O'Neil S."/>
            <person name="Pearson D."/>
            <person name="Quail M.A."/>
            <person name="Rabbinowitsch E."/>
            <person name="Rutherford K.M."/>
            <person name="Rutter S."/>
            <person name="Saunders D."/>
            <person name="Seeger K."/>
            <person name="Sharp S."/>
            <person name="Skelton J."/>
            <person name="Simmonds M.N."/>
            <person name="Squares R."/>
            <person name="Squares S."/>
            <person name="Stevens K."/>
            <person name="Taylor K."/>
            <person name="Taylor R.G."/>
            <person name="Tivey A."/>
            <person name="Walsh S.V."/>
            <person name="Warren T."/>
            <person name="Whitehead S."/>
            <person name="Woodward J.R."/>
            <person name="Volckaert G."/>
            <person name="Aert R."/>
            <person name="Robben J."/>
            <person name="Grymonprez B."/>
            <person name="Weltjens I."/>
            <person name="Vanstreels E."/>
            <person name="Rieger M."/>
            <person name="Schaefer M."/>
            <person name="Mueller-Auer S."/>
            <person name="Gabel C."/>
            <person name="Fuchs M."/>
            <person name="Duesterhoeft A."/>
            <person name="Fritzc C."/>
            <person name="Holzer E."/>
            <person name="Moestl D."/>
            <person name="Hilbert H."/>
            <person name="Borzym K."/>
            <person name="Langer I."/>
            <person name="Beck A."/>
            <person name="Lehrach H."/>
            <person name="Reinhardt R."/>
            <person name="Pohl T.M."/>
            <person name="Eger P."/>
            <person name="Zimmermann W."/>
            <person name="Wedler H."/>
            <person name="Wambutt R."/>
            <person name="Purnelle B."/>
            <person name="Goffeau A."/>
            <person name="Cadieu E."/>
            <person name="Dreano S."/>
            <person name="Gloux S."/>
            <person name="Lelaure V."/>
            <person name="Mottier S."/>
            <person name="Galibert F."/>
            <person name="Aves S.J."/>
            <person name="Xiang Z."/>
            <person name="Hunt C."/>
            <person name="Moore K."/>
            <person name="Hurst S.M."/>
            <person name="Lucas M."/>
            <person name="Rochet M."/>
            <person name="Gaillardin C."/>
            <person name="Tallada V.A."/>
            <person name="Garzon A."/>
            <person name="Thode G."/>
            <person name="Daga R.R."/>
            <person name="Cruzado L."/>
            <person name="Jimenez J."/>
            <person name="Sanchez M."/>
            <person name="del Rey F."/>
            <person name="Benito J."/>
            <person name="Dominguez A."/>
            <person name="Revuelta J.L."/>
            <person name="Moreno S."/>
            <person name="Armstrong J."/>
            <person name="Forsburg S.L."/>
            <person name="Cerutti L."/>
            <person name="Lowe T."/>
            <person name="McCombie W.R."/>
            <person name="Paulsen I."/>
            <person name="Potashkin J."/>
            <person name="Shpakovski G.V."/>
            <person name="Ussery D."/>
            <person name="Barrell B.G."/>
            <person name="Nurse P."/>
        </authorList>
    </citation>
    <scope>NUCLEOTIDE SEQUENCE [LARGE SCALE GENOMIC DNA]</scope>
    <source>
        <strain>972 / ATCC 24843</strain>
    </source>
</reference>
<reference key="2">
    <citation type="journal article" date="2005" name="Eukaryot. Cell">
        <title>Systematic deletion analysis of fission yeast protein kinases.</title>
        <authorList>
            <person name="Bimbo A."/>
            <person name="Jia Y."/>
            <person name="Poh S.L."/>
            <person name="Karuturi R.K.M."/>
            <person name="den Elzen N."/>
            <person name="Peng X."/>
            <person name="Zheng L."/>
            <person name="O'Connell M."/>
            <person name="Liu E.T."/>
            <person name="Balasubramanian M.K."/>
            <person name="Liu J."/>
        </authorList>
    </citation>
    <scope>IDENTIFICATION</scope>
</reference>
<reference key="3">
    <citation type="journal article" date="2006" name="Nat. Biotechnol.">
        <title>ORFeome cloning and global analysis of protein localization in the fission yeast Schizosaccharomyces pombe.</title>
        <authorList>
            <person name="Matsuyama A."/>
            <person name="Arai R."/>
            <person name="Yashiroda Y."/>
            <person name="Shirai A."/>
            <person name="Kamata A."/>
            <person name="Sekido S."/>
            <person name="Kobayashi Y."/>
            <person name="Hashimoto A."/>
            <person name="Hamamoto M."/>
            <person name="Hiraoka Y."/>
            <person name="Horinouchi S."/>
            <person name="Yoshida M."/>
        </authorList>
    </citation>
    <scope>SUBCELLULAR LOCATION [LARGE SCALE ANALYSIS]</scope>
</reference>
<reference key="4">
    <citation type="journal article" date="2008" name="J. Proteome Res.">
        <title>Phosphoproteome analysis of fission yeast.</title>
        <authorList>
            <person name="Wilson-Grady J.T."/>
            <person name="Villen J."/>
            <person name="Gygi S.P."/>
        </authorList>
    </citation>
    <scope>PHOSPHORYLATION [LARGE SCALE ANALYSIS] AT SER-132 AND SER-134</scope>
    <scope>IDENTIFICATION BY MASS SPECTROMETRY</scope>
</reference>
<organism>
    <name type="scientific">Schizosaccharomyces pombe (strain 972 / ATCC 24843)</name>
    <name type="common">Fission yeast</name>
    <dbReference type="NCBI Taxonomy" id="284812"/>
    <lineage>
        <taxon>Eukaryota</taxon>
        <taxon>Fungi</taxon>
        <taxon>Dikarya</taxon>
        <taxon>Ascomycota</taxon>
        <taxon>Taphrinomycotina</taxon>
        <taxon>Schizosaccharomycetes</taxon>
        <taxon>Schizosaccharomycetales</taxon>
        <taxon>Schizosaccharomycetaceae</taxon>
        <taxon>Schizosaccharomyces</taxon>
    </lineage>
</organism>